<organism>
    <name type="scientific">Polaromonas sp. (strain JS666 / ATCC BAA-500)</name>
    <dbReference type="NCBI Taxonomy" id="296591"/>
    <lineage>
        <taxon>Bacteria</taxon>
        <taxon>Pseudomonadati</taxon>
        <taxon>Pseudomonadota</taxon>
        <taxon>Betaproteobacteria</taxon>
        <taxon>Burkholderiales</taxon>
        <taxon>Comamonadaceae</taxon>
        <taxon>Polaromonas</taxon>
    </lineage>
</organism>
<sequence length="206" mass="22288">MTTPSTAPTPAPRKAEVSRNTAETQITVKLNLDGTGKASLSTGIGFFDHMLDQIARHGLIDLDIQAKGDLHIDGHHTVEDVGITFGQAVAQAVGDKKGLRRYGHAYVPLDEALSRVVIDFSGRPGLEMHVPFKSGMIGTFDSQLAYEFFQGFANHAFVTLHIDNLRGDNAHHQAETVFKAFARALRMALEIDPRSAGVIPSTKGSL</sequence>
<reference key="1">
    <citation type="journal article" date="2008" name="Appl. Environ. Microbiol.">
        <title>The genome of Polaromonas sp. strain JS666: insights into the evolution of a hydrocarbon- and xenobiotic-degrading bacterium, and features of relevance to biotechnology.</title>
        <authorList>
            <person name="Mattes T.E."/>
            <person name="Alexander A.K."/>
            <person name="Richardson P.M."/>
            <person name="Munk A.C."/>
            <person name="Han C.S."/>
            <person name="Stothard P."/>
            <person name="Coleman N.V."/>
        </authorList>
    </citation>
    <scope>NUCLEOTIDE SEQUENCE [LARGE SCALE GENOMIC DNA]</scope>
    <source>
        <strain>JS666 / ATCC BAA-500</strain>
    </source>
</reference>
<proteinExistence type="inferred from homology"/>
<comment type="catalytic activity">
    <reaction evidence="1">
        <text>D-erythro-1-(imidazol-4-yl)glycerol 3-phosphate = 3-(imidazol-4-yl)-2-oxopropyl phosphate + H2O</text>
        <dbReference type="Rhea" id="RHEA:11040"/>
        <dbReference type="ChEBI" id="CHEBI:15377"/>
        <dbReference type="ChEBI" id="CHEBI:57766"/>
        <dbReference type="ChEBI" id="CHEBI:58278"/>
        <dbReference type="EC" id="4.2.1.19"/>
    </reaction>
</comment>
<comment type="pathway">
    <text evidence="1">Amino-acid biosynthesis; L-histidine biosynthesis; L-histidine from 5-phospho-alpha-D-ribose 1-diphosphate: step 6/9.</text>
</comment>
<comment type="subcellular location">
    <subcellularLocation>
        <location evidence="1">Cytoplasm</location>
    </subcellularLocation>
</comment>
<comment type="similarity">
    <text evidence="1">Belongs to the imidazoleglycerol-phosphate dehydratase family.</text>
</comment>
<feature type="chain" id="PRO_0000336333" description="Imidazoleglycerol-phosphate dehydratase">
    <location>
        <begin position="1"/>
        <end position="206"/>
    </location>
</feature>
<feature type="region of interest" description="Disordered" evidence="2">
    <location>
        <begin position="1"/>
        <end position="21"/>
    </location>
</feature>
<evidence type="ECO:0000255" key="1">
    <source>
        <dbReference type="HAMAP-Rule" id="MF_00076"/>
    </source>
</evidence>
<evidence type="ECO:0000256" key="2">
    <source>
        <dbReference type="SAM" id="MobiDB-lite"/>
    </source>
</evidence>
<protein>
    <recommendedName>
        <fullName evidence="1">Imidazoleglycerol-phosphate dehydratase</fullName>
        <shortName evidence="1">IGPD</shortName>
        <ecNumber evidence="1">4.2.1.19</ecNumber>
    </recommendedName>
</protein>
<dbReference type="EC" id="4.2.1.19" evidence="1"/>
<dbReference type="EMBL" id="CP000316">
    <property type="protein sequence ID" value="ABE42762.1"/>
    <property type="molecule type" value="Genomic_DNA"/>
</dbReference>
<dbReference type="RefSeq" id="WP_011481765.1">
    <property type="nucleotide sequence ID" value="NC_007948.1"/>
</dbReference>
<dbReference type="SMR" id="Q12FD0"/>
<dbReference type="STRING" id="296591.Bpro_0806"/>
<dbReference type="KEGG" id="pol:Bpro_0806"/>
<dbReference type="eggNOG" id="COG0131">
    <property type="taxonomic scope" value="Bacteria"/>
</dbReference>
<dbReference type="HOGENOM" id="CLU_044308_2_0_4"/>
<dbReference type="OrthoDB" id="9790411at2"/>
<dbReference type="UniPathway" id="UPA00031">
    <property type="reaction ID" value="UER00011"/>
</dbReference>
<dbReference type="Proteomes" id="UP000001983">
    <property type="component" value="Chromosome"/>
</dbReference>
<dbReference type="GO" id="GO:0005737">
    <property type="term" value="C:cytoplasm"/>
    <property type="evidence" value="ECO:0007669"/>
    <property type="project" value="UniProtKB-SubCell"/>
</dbReference>
<dbReference type="GO" id="GO:0004424">
    <property type="term" value="F:imidazoleglycerol-phosphate dehydratase activity"/>
    <property type="evidence" value="ECO:0007669"/>
    <property type="project" value="UniProtKB-UniRule"/>
</dbReference>
<dbReference type="GO" id="GO:0000105">
    <property type="term" value="P:L-histidine biosynthetic process"/>
    <property type="evidence" value="ECO:0007669"/>
    <property type="project" value="UniProtKB-UniRule"/>
</dbReference>
<dbReference type="CDD" id="cd07914">
    <property type="entry name" value="IGPD"/>
    <property type="match status" value="1"/>
</dbReference>
<dbReference type="FunFam" id="3.30.230.40:FF:000002">
    <property type="entry name" value="Imidazoleglycerol-phosphate dehydratase"/>
    <property type="match status" value="1"/>
</dbReference>
<dbReference type="FunFam" id="3.30.230.40:FF:000003">
    <property type="entry name" value="Imidazoleglycerol-phosphate dehydratase HisB"/>
    <property type="match status" value="1"/>
</dbReference>
<dbReference type="Gene3D" id="3.30.230.40">
    <property type="entry name" value="Imidazole glycerol phosphate dehydratase, domain 1"/>
    <property type="match status" value="2"/>
</dbReference>
<dbReference type="HAMAP" id="MF_00076">
    <property type="entry name" value="HisB"/>
    <property type="match status" value="1"/>
</dbReference>
<dbReference type="InterPro" id="IPR038494">
    <property type="entry name" value="IGPD_sf"/>
</dbReference>
<dbReference type="InterPro" id="IPR000807">
    <property type="entry name" value="ImidazoleglycerolP_deHydtase"/>
</dbReference>
<dbReference type="InterPro" id="IPR020565">
    <property type="entry name" value="ImidazoleglycerP_deHydtase_CS"/>
</dbReference>
<dbReference type="InterPro" id="IPR020568">
    <property type="entry name" value="Ribosomal_Su5_D2-typ_SF"/>
</dbReference>
<dbReference type="NCBIfam" id="NF002106">
    <property type="entry name" value="PRK00951.1-1"/>
    <property type="match status" value="1"/>
</dbReference>
<dbReference type="NCBIfam" id="NF002109">
    <property type="entry name" value="PRK00951.1-5"/>
    <property type="match status" value="1"/>
</dbReference>
<dbReference type="NCBIfam" id="NF002111">
    <property type="entry name" value="PRK00951.2-1"/>
    <property type="match status" value="1"/>
</dbReference>
<dbReference type="NCBIfam" id="NF002114">
    <property type="entry name" value="PRK00951.2-4"/>
    <property type="match status" value="1"/>
</dbReference>
<dbReference type="PANTHER" id="PTHR23133:SF2">
    <property type="entry name" value="IMIDAZOLEGLYCEROL-PHOSPHATE DEHYDRATASE"/>
    <property type="match status" value="1"/>
</dbReference>
<dbReference type="PANTHER" id="PTHR23133">
    <property type="entry name" value="IMIDAZOLEGLYCEROL-PHOSPHATE DEHYDRATASE HIS7"/>
    <property type="match status" value="1"/>
</dbReference>
<dbReference type="Pfam" id="PF00475">
    <property type="entry name" value="IGPD"/>
    <property type="match status" value="1"/>
</dbReference>
<dbReference type="SUPFAM" id="SSF54211">
    <property type="entry name" value="Ribosomal protein S5 domain 2-like"/>
    <property type="match status" value="2"/>
</dbReference>
<dbReference type="PROSITE" id="PS00954">
    <property type="entry name" value="IGP_DEHYDRATASE_1"/>
    <property type="match status" value="1"/>
</dbReference>
<dbReference type="PROSITE" id="PS00955">
    <property type="entry name" value="IGP_DEHYDRATASE_2"/>
    <property type="match status" value="1"/>
</dbReference>
<accession>Q12FD0</accession>
<keyword id="KW-0028">Amino-acid biosynthesis</keyword>
<keyword id="KW-0963">Cytoplasm</keyword>
<keyword id="KW-0368">Histidine biosynthesis</keyword>
<keyword id="KW-0456">Lyase</keyword>
<keyword id="KW-1185">Reference proteome</keyword>
<name>HIS7_POLSJ</name>
<gene>
    <name evidence="1" type="primary">hisB</name>
    <name type="ordered locus">Bpro_0806</name>
</gene>